<dbReference type="EC" id="3.6.1.27" evidence="1"/>
<dbReference type="EMBL" id="CT573213">
    <property type="protein sequence ID" value="CAJ61875.1"/>
    <property type="molecule type" value="Genomic_DNA"/>
</dbReference>
<dbReference type="RefSeq" id="WP_011604380.1">
    <property type="nucleotide sequence ID" value="NC_008278.1"/>
</dbReference>
<dbReference type="SMR" id="Q0RKT0"/>
<dbReference type="STRING" id="326424.FRAAL3231"/>
<dbReference type="KEGG" id="fal:FRAAL3231"/>
<dbReference type="eggNOG" id="COG1968">
    <property type="taxonomic scope" value="Bacteria"/>
</dbReference>
<dbReference type="HOGENOM" id="CLU_060296_1_0_11"/>
<dbReference type="OrthoDB" id="9808289at2"/>
<dbReference type="Proteomes" id="UP000000657">
    <property type="component" value="Chromosome"/>
</dbReference>
<dbReference type="GO" id="GO:0005886">
    <property type="term" value="C:plasma membrane"/>
    <property type="evidence" value="ECO:0007669"/>
    <property type="project" value="UniProtKB-SubCell"/>
</dbReference>
<dbReference type="GO" id="GO:0050380">
    <property type="term" value="F:undecaprenyl-diphosphatase activity"/>
    <property type="evidence" value="ECO:0007669"/>
    <property type="project" value="UniProtKB-UniRule"/>
</dbReference>
<dbReference type="GO" id="GO:0071555">
    <property type="term" value="P:cell wall organization"/>
    <property type="evidence" value="ECO:0007669"/>
    <property type="project" value="UniProtKB-KW"/>
</dbReference>
<dbReference type="GO" id="GO:0009252">
    <property type="term" value="P:peptidoglycan biosynthetic process"/>
    <property type="evidence" value="ECO:0007669"/>
    <property type="project" value="UniProtKB-KW"/>
</dbReference>
<dbReference type="GO" id="GO:0008360">
    <property type="term" value="P:regulation of cell shape"/>
    <property type="evidence" value="ECO:0007669"/>
    <property type="project" value="UniProtKB-KW"/>
</dbReference>
<dbReference type="GO" id="GO:0046677">
    <property type="term" value="P:response to antibiotic"/>
    <property type="evidence" value="ECO:0007669"/>
    <property type="project" value="UniProtKB-UniRule"/>
</dbReference>
<dbReference type="HAMAP" id="MF_01006">
    <property type="entry name" value="Undec_diphosphatase"/>
    <property type="match status" value="1"/>
</dbReference>
<dbReference type="InterPro" id="IPR003824">
    <property type="entry name" value="UppP"/>
</dbReference>
<dbReference type="NCBIfam" id="NF001392">
    <property type="entry name" value="PRK00281.2-1"/>
    <property type="match status" value="1"/>
</dbReference>
<dbReference type="NCBIfam" id="TIGR00753">
    <property type="entry name" value="undec_PP_bacA"/>
    <property type="match status" value="1"/>
</dbReference>
<dbReference type="PANTHER" id="PTHR30622">
    <property type="entry name" value="UNDECAPRENYL-DIPHOSPHATASE"/>
    <property type="match status" value="1"/>
</dbReference>
<dbReference type="PANTHER" id="PTHR30622:SF3">
    <property type="entry name" value="UNDECAPRENYL-DIPHOSPHATASE"/>
    <property type="match status" value="1"/>
</dbReference>
<dbReference type="Pfam" id="PF02673">
    <property type="entry name" value="BacA"/>
    <property type="match status" value="1"/>
</dbReference>
<proteinExistence type="inferred from homology"/>
<comment type="function">
    <text evidence="1">Catalyzes the dephosphorylation of undecaprenyl diphosphate (UPP). Confers resistance to bacitracin.</text>
</comment>
<comment type="catalytic activity">
    <reaction evidence="1">
        <text>di-trans,octa-cis-undecaprenyl diphosphate + H2O = di-trans,octa-cis-undecaprenyl phosphate + phosphate + H(+)</text>
        <dbReference type="Rhea" id="RHEA:28094"/>
        <dbReference type="ChEBI" id="CHEBI:15377"/>
        <dbReference type="ChEBI" id="CHEBI:15378"/>
        <dbReference type="ChEBI" id="CHEBI:43474"/>
        <dbReference type="ChEBI" id="CHEBI:58405"/>
        <dbReference type="ChEBI" id="CHEBI:60392"/>
        <dbReference type="EC" id="3.6.1.27"/>
    </reaction>
</comment>
<comment type="subcellular location">
    <subcellularLocation>
        <location evidence="1">Cell membrane</location>
        <topology evidence="1">Multi-pass membrane protein</topology>
    </subcellularLocation>
</comment>
<comment type="miscellaneous">
    <text>Bacitracin is thought to be involved in the inhibition of peptidoglycan synthesis by sequestering undecaprenyl diphosphate, thereby reducing the pool of lipid carrier available.</text>
</comment>
<comment type="similarity">
    <text evidence="1">Belongs to the UppP family.</text>
</comment>
<gene>
    <name evidence="1" type="primary">uppP1</name>
    <name type="ordered locus">FRAAL3231</name>
</gene>
<keyword id="KW-0046">Antibiotic resistance</keyword>
<keyword id="KW-1003">Cell membrane</keyword>
<keyword id="KW-0133">Cell shape</keyword>
<keyword id="KW-0961">Cell wall biogenesis/degradation</keyword>
<keyword id="KW-0378">Hydrolase</keyword>
<keyword id="KW-0472">Membrane</keyword>
<keyword id="KW-0573">Peptidoglycan synthesis</keyword>
<keyword id="KW-1185">Reference proteome</keyword>
<keyword id="KW-0812">Transmembrane</keyword>
<keyword id="KW-1133">Transmembrane helix</keyword>
<evidence type="ECO:0000255" key="1">
    <source>
        <dbReference type="HAMAP-Rule" id="MF_01006"/>
    </source>
</evidence>
<sequence length="278" mass="29238">MSAISVGQAIILGVVEGLTEFLPISSTGHLKIAEGLMDIQVDDKAVVGFTAVIQVGAIAAVLVYFFADIRRFVTAWGRGLANPAARTNHDYTFTWWVIYATIPVVLVGLAAKPLIDGPLASLWVVAASLLAGSALMWFADQYGRHKRGEDDLSLPDAMIVGTSQILALLFPGFSRSGATISTGLIRDLDRVAATRLSFFLSIPALTGAGLYELKDAVGGGVSAAPLAVGTVVSFFVAYASIAWLLKFVARHNFNAFIIYRVAVAVLLAGLLAGGAINA</sequence>
<accession>Q0RKT0</accession>
<reference key="1">
    <citation type="journal article" date="2007" name="Genome Res.">
        <title>Genome characteristics of facultatively symbiotic Frankia sp. strains reflect host range and host plant biogeography.</title>
        <authorList>
            <person name="Normand P."/>
            <person name="Lapierre P."/>
            <person name="Tisa L.S."/>
            <person name="Gogarten J.P."/>
            <person name="Alloisio N."/>
            <person name="Bagnarol E."/>
            <person name="Bassi C.A."/>
            <person name="Berry A.M."/>
            <person name="Bickhart D.M."/>
            <person name="Choisne N."/>
            <person name="Couloux A."/>
            <person name="Cournoyer B."/>
            <person name="Cruveiller S."/>
            <person name="Daubin V."/>
            <person name="Demange N."/>
            <person name="Francino M.P."/>
            <person name="Goltsman E."/>
            <person name="Huang Y."/>
            <person name="Kopp O.R."/>
            <person name="Labarre L."/>
            <person name="Lapidus A."/>
            <person name="Lavire C."/>
            <person name="Marechal J."/>
            <person name="Martinez M."/>
            <person name="Mastronunzio J.E."/>
            <person name="Mullin B.C."/>
            <person name="Niemann J."/>
            <person name="Pujic P."/>
            <person name="Rawnsley T."/>
            <person name="Rouy Z."/>
            <person name="Schenowitz C."/>
            <person name="Sellstedt A."/>
            <person name="Tavares F."/>
            <person name="Tomkins J.P."/>
            <person name="Vallenet D."/>
            <person name="Valverde C."/>
            <person name="Wall L.G."/>
            <person name="Wang Y."/>
            <person name="Medigue C."/>
            <person name="Benson D.R."/>
        </authorList>
    </citation>
    <scope>NUCLEOTIDE SEQUENCE [LARGE SCALE GENOMIC DNA]</scope>
    <source>
        <strain>DSM 45986 / CECT 9034 / ACN14a</strain>
    </source>
</reference>
<name>UPPP1_FRAAA</name>
<protein>
    <recommendedName>
        <fullName evidence="1">Undecaprenyl-diphosphatase 1</fullName>
        <ecNumber evidence="1">3.6.1.27</ecNumber>
    </recommendedName>
    <alternativeName>
        <fullName evidence="1">Bacitracin resistance protein 1</fullName>
    </alternativeName>
    <alternativeName>
        <fullName evidence="1">Undecaprenyl pyrophosphate phosphatase 1</fullName>
    </alternativeName>
</protein>
<organism>
    <name type="scientific">Frankia alni (strain DSM 45986 / CECT 9034 / ACN14a)</name>
    <dbReference type="NCBI Taxonomy" id="326424"/>
    <lineage>
        <taxon>Bacteria</taxon>
        <taxon>Bacillati</taxon>
        <taxon>Actinomycetota</taxon>
        <taxon>Actinomycetes</taxon>
        <taxon>Frankiales</taxon>
        <taxon>Frankiaceae</taxon>
        <taxon>Frankia</taxon>
    </lineage>
</organism>
<feature type="chain" id="PRO_0000290709" description="Undecaprenyl-diphosphatase 1">
    <location>
        <begin position="1"/>
        <end position="278"/>
    </location>
</feature>
<feature type="transmembrane region" description="Helical" evidence="1">
    <location>
        <begin position="46"/>
        <end position="66"/>
    </location>
</feature>
<feature type="transmembrane region" description="Helical" evidence="1">
    <location>
        <begin position="91"/>
        <end position="111"/>
    </location>
</feature>
<feature type="transmembrane region" description="Helical" evidence="1">
    <location>
        <begin position="119"/>
        <end position="139"/>
    </location>
</feature>
<feature type="transmembrane region" description="Helical" evidence="1">
    <location>
        <begin position="153"/>
        <end position="173"/>
    </location>
</feature>
<feature type="transmembrane region" description="Helical" evidence="1">
    <location>
        <begin position="191"/>
        <end position="211"/>
    </location>
</feature>
<feature type="transmembrane region" description="Helical" evidence="1">
    <location>
        <begin position="225"/>
        <end position="245"/>
    </location>
</feature>
<feature type="transmembrane region" description="Helical" evidence="1">
    <location>
        <begin position="256"/>
        <end position="276"/>
    </location>
</feature>